<reference key="1">
    <citation type="journal article" date="2006" name="Proc. Natl. Acad. Sci. U.S.A.">
        <title>Comparative genomics of the lactic acid bacteria.</title>
        <authorList>
            <person name="Makarova K.S."/>
            <person name="Slesarev A."/>
            <person name="Wolf Y.I."/>
            <person name="Sorokin A."/>
            <person name="Mirkin B."/>
            <person name="Koonin E.V."/>
            <person name="Pavlov A."/>
            <person name="Pavlova N."/>
            <person name="Karamychev V."/>
            <person name="Polouchine N."/>
            <person name="Shakhova V."/>
            <person name="Grigoriev I."/>
            <person name="Lou Y."/>
            <person name="Rohksar D."/>
            <person name="Lucas S."/>
            <person name="Huang K."/>
            <person name="Goodstein D.M."/>
            <person name="Hawkins T."/>
            <person name="Plengvidhya V."/>
            <person name="Welker D."/>
            <person name="Hughes J."/>
            <person name="Goh Y."/>
            <person name="Benson A."/>
            <person name="Baldwin K."/>
            <person name="Lee J.-H."/>
            <person name="Diaz-Muniz I."/>
            <person name="Dosti B."/>
            <person name="Smeianov V."/>
            <person name="Wechter W."/>
            <person name="Barabote R."/>
            <person name="Lorca G."/>
            <person name="Altermann E."/>
            <person name="Barrangou R."/>
            <person name="Ganesan B."/>
            <person name="Xie Y."/>
            <person name="Rawsthorne H."/>
            <person name="Tamir D."/>
            <person name="Parker C."/>
            <person name="Breidt F."/>
            <person name="Broadbent J.R."/>
            <person name="Hutkins R."/>
            <person name="O'Sullivan D."/>
            <person name="Steele J."/>
            <person name="Unlu G."/>
            <person name="Saier M.H. Jr."/>
            <person name="Klaenhammer T."/>
            <person name="Richardson P."/>
            <person name="Kozyavkin S."/>
            <person name="Weimer B.C."/>
            <person name="Mills D.A."/>
        </authorList>
    </citation>
    <scope>NUCLEOTIDE SEQUENCE [LARGE SCALE GENOMIC DNA]</scope>
    <source>
        <strain>ATCC BAA-331 / PSU-1</strain>
    </source>
</reference>
<dbReference type="EMBL" id="CP000411">
    <property type="protein sequence ID" value="ABJ56601.1"/>
    <property type="molecule type" value="Genomic_DNA"/>
</dbReference>
<dbReference type="RefSeq" id="WP_002818533.1">
    <property type="nucleotide sequence ID" value="NC_008528.1"/>
</dbReference>
<dbReference type="SMR" id="Q04G21"/>
<dbReference type="STRING" id="203123.OEOE_0664"/>
<dbReference type="GeneID" id="75066259"/>
<dbReference type="KEGG" id="ooe:OEOE_0664"/>
<dbReference type="eggNOG" id="COG0224">
    <property type="taxonomic scope" value="Bacteria"/>
</dbReference>
<dbReference type="HOGENOM" id="CLU_050669_0_1_9"/>
<dbReference type="Proteomes" id="UP000000774">
    <property type="component" value="Chromosome"/>
</dbReference>
<dbReference type="GO" id="GO:0005886">
    <property type="term" value="C:plasma membrane"/>
    <property type="evidence" value="ECO:0007669"/>
    <property type="project" value="UniProtKB-SubCell"/>
</dbReference>
<dbReference type="GO" id="GO:0045259">
    <property type="term" value="C:proton-transporting ATP synthase complex"/>
    <property type="evidence" value="ECO:0007669"/>
    <property type="project" value="UniProtKB-KW"/>
</dbReference>
<dbReference type="GO" id="GO:0005524">
    <property type="term" value="F:ATP binding"/>
    <property type="evidence" value="ECO:0007669"/>
    <property type="project" value="UniProtKB-UniRule"/>
</dbReference>
<dbReference type="GO" id="GO:0046933">
    <property type="term" value="F:proton-transporting ATP synthase activity, rotational mechanism"/>
    <property type="evidence" value="ECO:0007669"/>
    <property type="project" value="UniProtKB-UniRule"/>
</dbReference>
<dbReference type="GO" id="GO:0042777">
    <property type="term" value="P:proton motive force-driven plasma membrane ATP synthesis"/>
    <property type="evidence" value="ECO:0007669"/>
    <property type="project" value="UniProtKB-UniRule"/>
</dbReference>
<dbReference type="CDD" id="cd12151">
    <property type="entry name" value="F1-ATPase_gamma"/>
    <property type="match status" value="1"/>
</dbReference>
<dbReference type="Gene3D" id="3.40.1380.10">
    <property type="match status" value="1"/>
</dbReference>
<dbReference type="Gene3D" id="1.10.287.80">
    <property type="entry name" value="ATP synthase, gamma subunit, helix hairpin domain"/>
    <property type="match status" value="2"/>
</dbReference>
<dbReference type="HAMAP" id="MF_00815">
    <property type="entry name" value="ATP_synth_gamma_bact"/>
    <property type="match status" value="1"/>
</dbReference>
<dbReference type="InterPro" id="IPR035968">
    <property type="entry name" value="ATP_synth_F1_ATPase_gsu"/>
</dbReference>
<dbReference type="InterPro" id="IPR000131">
    <property type="entry name" value="ATP_synth_F1_gsu"/>
</dbReference>
<dbReference type="NCBIfam" id="TIGR01146">
    <property type="entry name" value="ATPsyn_F1gamma"/>
    <property type="match status" value="1"/>
</dbReference>
<dbReference type="PANTHER" id="PTHR11693">
    <property type="entry name" value="ATP SYNTHASE GAMMA CHAIN"/>
    <property type="match status" value="1"/>
</dbReference>
<dbReference type="PANTHER" id="PTHR11693:SF22">
    <property type="entry name" value="ATP SYNTHASE SUBUNIT GAMMA, MITOCHONDRIAL"/>
    <property type="match status" value="1"/>
</dbReference>
<dbReference type="Pfam" id="PF00231">
    <property type="entry name" value="ATP-synt"/>
    <property type="match status" value="1"/>
</dbReference>
<dbReference type="PRINTS" id="PR00126">
    <property type="entry name" value="ATPASEGAMMA"/>
</dbReference>
<dbReference type="SUPFAM" id="SSF52943">
    <property type="entry name" value="ATP synthase (F1-ATPase), gamma subunit"/>
    <property type="match status" value="1"/>
</dbReference>
<comment type="function">
    <text evidence="1">Produces ATP from ADP in the presence of a proton gradient across the membrane. The gamma chain is believed to be important in regulating ATPase activity and the flow of protons through the CF(0) complex.</text>
</comment>
<comment type="subunit">
    <text evidence="1">F-type ATPases have 2 components, CF(1) - the catalytic core - and CF(0) - the membrane proton channel. CF(1) has five subunits: alpha(3), beta(3), gamma(1), delta(1), epsilon(1). CF(0) has three main subunits: a, b and c.</text>
</comment>
<comment type="subcellular location">
    <subcellularLocation>
        <location evidence="1">Cell membrane</location>
        <topology evidence="1">Peripheral membrane protein</topology>
    </subcellularLocation>
</comment>
<comment type="similarity">
    <text evidence="1">Belongs to the ATPase gamma chain family.</text>
</comment>
<organism>
    <name type="scientific">Oenococcus oeni (strain ATCC BAA-331 / PSU-1)</name>
    <dbReference type="NCBI Taxonomy" id="203123"/>
    <lineage>
        <taxon>Bacteria</taxon>
        <taxon>Bacillati</taxon>
        <taxon>Bacillota</taxon>
        <taxon>Bacilli</taxon>
        <taxon>Lactobacillales</taxon>
        <taxon>Lactobacillaceae</taxon>
        <taxon>Oenococcus</taxon>
    </lineage>
</organism>
<keyword id="KW-0066">ATP synthesis</keyword>
<keyword id="KW-1003">Cell membrane</keyword>
<keyword id="KW-0139">CF(1)</keyword>
<keyword id="KW-0375">Hydrogen ion transport</keyword>
<keyword id="KW-0406">Ion transport</keyword>
<keyword id="KW-0472">Membrane</keyword>
<keyword id="KW-1185">Reference proteome</keyword>
<keyword id="KW-0813">Transport</keyword>
<gene>
    <name evidence="1" type="primary">atpG</name>
    <name type="ordered locus">OEOE_0664</name>
</gene>
<proteinExistence type="inferred from homology"/>
<accession>Q04G21</accession>
<evidence type="ECO:0000255" key="1">
    <source>
        <dbReference type="HAMAP-Rule" id="MF_00815"/>
    </source>
</evidence>
<feature type="chain" id="PRO_1000053275" description="ATP synthase gamma chain">
    <location>
        <begin position="1"/>
        <end position="303"/>
    </location>
</feature>
<sequence length="303" mass="33794">MASLQDIRRRIDSTKKTSQITSAMQMVSSSKLIQIQKHTSGYLDYANHVEAIVAHLAAAHLLEHQNGSSIPFITQRPVKTTAILVITSDRGLVGGYNNQVLKRTDQIMREQKLTKENAVIFALGGKGSDYYAKRGFTIAFENRDITDVPKFWEVSDLVKEVTKQYAARKFDALELVFNHFINRLKNDVVNQQILPIRSENFQRDEKGNLTADKYKGQSSIYEFEPAPESLLKIVLPQFAQSLLYGAILDAKTAEHAASASAMRAATDNAKDLISTLELKYNRARQAAITTEITEITGGMAALQ</sequence>
<name>ATPG_OENOB</name>
<protein>
    <recommendedName>
        <fullName evidence="1">ATP synthase gamma chain</fullName>
    </recommendedName>
    <alternativeName>
        <fullName evidence="1">ATP synthase F1 sector gamma subunit</fullName>
    </alternativeName>
    <alternativeName>
        <fullName evidence="1">F-ATPase gamma subunit</fullName>
    </alternativeName>
</protein>